<organism>
    <name type="scientific">Saccharomyces cerevisiae (strain ATCC 204508 / S288c)</name>
    <name type="common">Baker's yeast</name>
    <dbReference type="NCBI Taxonomy" id="559292"/>
    <lineage>
        <taxon>Eukaryota</taxon>
        <taxon>Fungi</taxon>
        <taxon>Dikarya</taxon>
        <taxon>Ascomycota</taxon>
        <taxon>Saccharomycotina</taxon>
        <taxon>Saccharomycetes</taxon>
        <taxon>Saccharomycetales</taxon>
        <taxon>Saccharomycetaceae</taxon>
        <taxon>Saccharomyces</taxon>
    </lineage>
</organism>
<accession>Q3E7A2</accession>
<accession>D3DLY5</accession>
<gene>
    <name type="ordered locus">YER078W-A</name>
</gene>
<name>YE078_YEAST</name>
<protein>
    <recommendedName>
        <fullName>Uncharacterized protein YER078W-A</fullName>
    </recommendedName>
</protein>
<reference key="1">
    <citation type="journal article" date="1997" name="Nature">
        <title>The nucleotide sequence of Saccharomyces cerevisiae chromosome V.</title>
        <authorList>
            <person name="Dietrich F.S."/>
            <person name="Mulligan J.T."/>
            <person name="Hennessy K.M."/>
            <person name="Yelton M.A."/>
            <person name="Allen E."/>
            <person name="Araujo R."/>
            <person name="Aviles E."/>
            <person name="Berno A."/>
            <person name="Brennan T."/>
            <person name="Carpenter J."/>
            <person name="Chen E."/>
            <person name="Cherry J.M."/>
            <person name="Chung E."/>
            <person name="Duncan M."/>
            <person name="Guzman E."/>
            <person name="Hartzell G."/>
            <person name="Hunicke-Smith S."/>
            <person name="Hyman R.W."/>
            <person name="Kayser A."/>
            <person name="Komp C."/>
            <person name="Lashkari D."/>
            <person name="Lew H."/>
            <person name="Lin D."/>
            <person name="Mosedale D."/>
            <person name="Nakahara K."/>
            <person name="Namath A."/>
            <person name="Norgren R."/>
            <person name="Oefner P."/>
            <person name="Oh C."/>
            <person name="Petel F.X."/>
            <person name="Roberts D."/>
            <person name="Sehl P."/>
            <person name="Schramm S."/>
            <person name="Shogren T."/>
            <person name="Smith V."/>
            <person name="Taylor P."/>
            <person name="Wei Y."/>
            <person name="Botstein D."/>
            <person name="Davis R.W."/>
        </authorList>
    </citation>
    <scope>NUCLEOTIDE SEQUENCE [LARGE SCALE GENOMIC DNA]</scope>
    <source>
        <strain>ATCC 204508 / S288c</strain>
    </source>
</reference>
<reference key="2">
    <citation type="journal article" date="2014" name="G3 (Bethesda)">
        <title>The reference genome sequence of Saccharomyces cerevisiae: Then and now.</title>
        <authorList>
            <person name="Engel S.R."/>
            <person name="Dietrich F.S."/>
            <person name="Fisk D.G."/>
            <person name="Binkley G."/>
            <person name="Balakrishnan R."/>
            <person name="Costanzo M.C."/>
            <person name="Dwight S.S."/>
            <person name="Hitz B.C."/>
            <person name="Karra K."/>
            <person name="Nash R.S."/>
            <person name="Weng S."/>
            <person name="Wong E.D."/>
            <person name="Lloyd P."/>
            <person name="Skrzypek M.S."/>
            <person name="Miyasato S.R."/>
            <person name="Simison M."/>
            <person name="Cherry J.M."/>
        </authorList>
    </citation>
    <scope>GENOME REANNOTATION</scope>
    <source>
        <strain>ATCC 204508 / S288c</strain>
    </source>
</reference>
<reference key="3">
    <citation type="journal article" date="2003" name="Genome Res.">
        <title>Systematic discovery of new genes in the Saccharomyces cerevisiae genome.</title>
        <authorList>
            <person name="Kessler M.M."/>
            <person name="Zeng Q."/>
            <person name="Hogan S."/>
            <person name="Cook R."/>
            <person name="Morales A.J."/>
            <person name="Cottarel G."/>
        </authorList>
    </citation>
    <scope>GENOME REANNOTATION</scope>
</reference>
<keyword id="KW-1185">Reference proteome</keyword>
<proteinExistence type="predicted"/>
<feature type="chain" id="PRO_0000245371" description="Uncharacterized protein YER078W-A">
    <location>
        <begin position="1"/>
        <end position="54"/>
    </location>
</feature>
<sequence length="54" mass="6263">MVRLSYLRLILPPCRLSELSSLAILYQPVIPILISTITFQHFFKCVHTPCNVYI</sequence>
<dbReference type="EMBL" id="U18839">
    <property type="status" value="NOT_ANNOTATED_CDS"/>
    <property type="molecule type" value="Genomic_DNA"/>
</dbReference>
<dbReference type="EMBL" id="BK006939">
    <property type="protein sequence ID" value="DAA07739.1"/>
    <property type="molecule type" value="Genomic_DNA"/>
</dbReference>
<dbReference type="RefSeq" id="NP_878068.3">
    <property type="nucleotide sequence ID" value="NM_001184548.3"/>
</dbReference>
<dbReference type="BioGRID" id="37078">
    <property type="interactions" value="21"/>
</dbReference>
<dbReference type="FunCoup" id="Q3E7A2">
    <property type="interactions" value="7"/>
</dbReference>
<dbReference type="STRING" id="4932.YER078W-A"/>
<dbReference type="PaxDb" id="4932-YER078W-A"/>
<dbReference type="EnsemblFungi" id="YER078W-A_mRNA">
    <property type="protein sequence ID" value="YER078W-A"/>
    <property type="gene ID" value="YER078W-A"/>
</dbReference>
<dbReference type="GeneID" id="1466536"/>
<dbReference type="KEGG" id="sce:YER078W-A"/>
<dbReference type="AGR" id="SGD:S000028546"/>
<dbReference type="SGD" id="S000028546">
    <property type="gene designation" value="YER078W-A"/>
</dbReference>
<dbReference type="VEuPathDB" id="FungiDB:YER078W-A"/>
<dbReference type="HOGENOM" id="CLU_3052145_0_0_1"/>
<dbReference type="InParanoid" id="Q3E7A2"/>
<dbReference type="OrthoDB" id="10277892at2759"/>
<dbReference type="BioCyc" id="YEAST:G3O-30394-MONOMER"/>
<dbReference type="BioGRID-ORCS" id="1466536">
    <property type="hits" value="0 hits in 10 CRISPR screens"/>
</dbReference>
<dbReference type="PRO" id="PR:Q3E7A2"/>
<dbReference type="Proteomes" id="UP000002311">
    <property type="component" value="Chromosome V"/>
</dbReference>
<dbReference type="RNAct" id="Q3E7A2">
    <property type="molecule type" value="protein"/>
</dbReference>